<keyword id="KW-0067">ATP-binding</keyword>
<keyword id="KW-0143">Chaperone</keyword>
<keyword id="KW-0479">Metal-binding</keyword>
<keyword id="KW-0547">Nucleotide-binding</keyword>
<keyword id="KW-1185">Reference proteome</keyword>
<keyword id="KW-0862">Zinc</keyword>
<protein>
    <recommendedName>
        <fullName evidence="1">ATP-dependent Clp protease ATP-binding subunit ClpX</fullName>
    </recommendedName>
</protein>
<name>CLPX_STRP1</name>
<organism>
    <name type="scientific">Streptococcus pyogenes serotype M1</name>
    <dbReference type="NCBI Taxonomy" id="301447"/>
    <lineage>
        <taxon>Bacteria</taxon>
        <taxon>Bacillati</taxon>
        <taxon>Bacillota</taxon>
        <taxon>Bacilli</taxon>
        <taxon>Lactobacillales</taxon>
        <taxon>Streptococcaceae</taxon>
        <taxon>Streptococcus</taxon>
    </lineage>
</organism>
<comment type="function">
    <text evidence="1">ATP-dependent specificity component of the Clp protease. It directs the protease to specific substrates. Can perform chaperone functions in the absence of ClpP.</text>
</comment>
<comment type="subunit">
    <text evidence="1">Component of the ClpX-ClpP complex. Forms a hexameric ring that, in the presence of ATP, binds to fourteen ClpP subunits assembled into a disk-like structure with a central cavity, resembling the structure of eukaryotic proteasomes.</text>
</comment>
<comment type="similarity">
    <text evidence="1">Belongs to the ClpX chaperone family.</text>
</comment>
<dbReference type="EMBL" id="AE004092">
    <property type="protein sequence ID" value="AAK33805.1"/>
    <property type="molecule type" value="Genomic_DNA"/>
</dbReference>
<dbReference type="EMBL" id="CP000017">
    <property type="protein sequence ID" value="AAZ51309.1"/>
    <property type="molecule type" value="Genomic_DNA"/>
</dbReference>
<dbReference type="RefSeq" id="NP_269084.1">
    <property type="nucleotide sequence ID" value="NC_002737.2"/>
</dbReference>
<dbReference type="SMR" id="P63793"/>
<dbReference type="PaxDb" id="1314-HKU360_00700"/>
<dbReference type="KEGG" id="spy:SPy_0885"/>
<dbReference type="KEGG" id="spz:M5005_Spy0691"/>
<dbReference type="PATRIC" id="fig|160490.10.peg.761"/>
<dbReference type="HOGENOM" id="CLU_014218_8_2_9"/>
<dbReference type="OMA" id="LDTMFDL"/>
<dbReference type="Proteomes" id="UP000000750">
    <property type="component" value="Chromosome"/>
</dbReference>
<dbReference type="GO" id="GO:0009376">
    <property type="term" value="C:HslUV protease complex"/>
    <property type="evidence" value="ECO:0007669"/>
    <property type="project" value="TreeGrafter"/>
</dbReference>
<dbReference type="GO" id="GO:0005524">
    <property type="term" value="F:ATP binding"/>
    <property type="evidence" value="ECO:0007669"/>
    <property type="project" value="UniProtKB-UniRule"/>
</dbReference>
<dbReference type="GO" id="GO:0016887">
    <property type="term" value="F:ATP hydrolysis activity"/>
    <property type="evidence" value="ECO:0007669"/>
    <property type="project" value="InterPro"/>
</dbReference>
<dbReference type="GO" id="GO:0140662">
    <property type="term" value="F:ATP-dependent protein folding chaperone"/>
    <property type="evidence" value="ECO:0007669"/>
    <property type="project" value="InterPro"/>
</dbReference>
<dbReference type="GO" id="GO:0046983">
    <property type="term" value="F:protein dimerization activity"/>
    <property type="evidence" value="ECO:0007669"/>
    <property type="project" value="InterPro"/>
</dbReference>
<dbReference type="GO" id="GO:0051082">
    <property type="term" value="F:unfolded protein binding"/>
    <property type="evidence" value="ECO:0007669"/>
    <property type="project" value="UniProtKB-UniRule"/>
</dbReference>
<dbReference type="GO" id="GO:0008270">
    <property type="term" value="F:zinc ion binding"/>
    <property type="evidence" value="ECO:0007669"/>
    <property type="project" value="InterPro"/>
</dbReference>
<dbReference type="GO" id="GO:0051301">
    <property type="term" value="P:cell division"/>
    <property type="evidence" value="ECO:0007669"/>
    <property type="project" value="TreeGrafter"/>
</dbReference>
<dbReference type="GO" id="GO:0051603">
    <property type="term" value="P:proteolysis involved in protein catabolic process"/>
    <property type="evidence" value="ECO:0007669"/>
    <property type="project" value="TreeGrafter"/>
</dbReference>
<dbReference type="CDD" id="cd19497">
    <property type="entry name" value="RecA-like_ClpX"/>
    <property type="match status" value="1"/>
</dbReference>
<dbReference type="FunFam" id="1.10.8.60:FF:000002">
    <property type="entry name" value="ATP-dependent Clp protease ATP-binding subunit ClpX"/>
    <property type="match status" value="1"/>
</dbReference>
<dbReference type="FunFam" id="3.40.50.300:FF:000005">
    <property type="entry name" value="ATP-dependent Clp protease ATP-binding subunit ClpX"/>
    <property type="match status" value="1"/>
</dbReference>
<dbReference type="Gene3D" id="1.10.8.60">
    <property type="match status" value="1"/>
</dbReference>
<dbReference type="Gene3D" id="6.20.220.10">
    <property type="entry name" value="ClpX chaperone, C4-type zinc finger domain"/>
    <property type="match status" value="1"/>
</dbReference>
<dbReference type="Gene3D" id="3.40.50.300">
    <property type="entry name" value="P-loop containing nucleotide triphosphate hydrolases"/>
    <property type="match status" value="1"/>
</dbReference>
<dbReference type="HAMAP" id="MF_00175">
    <property type="entry name" value="ClpX"/>
    <property type="match status" value="1"/>
</dbReference>
<dbReference type="InterPro" id="IPR003593">
    <property type="entry name" value="AAA+_ATPase"/>
</dbReference>
<dbReference type="InterPro" id="IPR050052">
    <property type="entry name" value="ATP-dep_Clp_protease_ClpX"/>
</dbReference>
<dbReference type="InterPro" id="IPR003959">
    <property type="entry name" value="ATPase_AAA_core"/>
</dbReference>
<dbReference type="InterPro" id="IPR019489">
    <property type="entry name" value="Clp_ATPase_C"/>
</dbReference>
<dbReference type="InterPro" id="IPR004487">
    <property type="entry name" value="Clp_protease_ATP-bd_su_ClpX"/>
</dbReference>
<dbReference type="InterPro" id="IPR046425">
    <property type="entry name" value="ClpX_bact"/>
</dbReference>
<dbReference type="InterPro" id="IPR027417">
    <property type="entry name" value="P-loop_NTPase"/>
</dbReference>
<dbReference type="InterPro" id="IPR010603">
    <property type="entry name" value="Znf_CppX_C4"/>
</dbReference>
<dbReference type="InterPro" id="IPR038366">
    <property type="entry name" value="Znf_CppX_C4_sf"/>
</dbReference>
<dbReference type="NCBIfam" id="TIGR00382">
    <property type="entry name" value="clpX"/>
    <property type="match status" value="1"/>
</dbReference>
<dbReference type="NCBIfam" id="NF003745">
    <property type="entry name" value="PRK05342.1"/>
    <property type="match status" value="1"/>
</dbReference>
<dbReference type="PANTHER" id="PTHR48102:SF7">
    <property type="entry name" value="ATP-DEPENDENT CLP PROTEASE ATP-BINDING SUBUNIT CLPX-LIKE, MITOCHONDRIAL"/>
    <property type="match status" value="1"/>
</dbReference>
<dbReference type="PANTHER" id="PTHR48102">
    <property type="entry name" value="ATP-DEPENDENT CLP PROTEASE ATP-BINDING SUBUNIT CLPX-LIKE, MITOCHONDRIAL-RELATED"/>
    <property type="match status" value="1"/>
</dbReference>
<dbReference type="Pfam" id="PF07724">
    <property type="entry name" value="AAA_2"/>
    <property type="match status" value="1"/>
</dbReference>
<dbReference type="Pfam" id="PF10431">
    <property type="entry name" value="ClpB_D2-small"/>
    <property type="match status" value="1"/>
</dbReference>
<dbReference type="Pfam" id="PF06689">
    <property type="entry name" value="zf-C4_ClpX"/>
    <property type="match status" value="1"/>
</dbReference>
<dbReference type="SMART" id="SM00382">
    <property type="entry name" value="AAA"/>
    <property type="match status" value="1"/>
</dbReference>
<dbReference type="SMART" id="SM01086">
    <property type="entry name" value="ClpB_D2-small"/>
    <property type="match status" value="1"/>
</dbReference>
<dbReference type="SMART" id="SM00994">
    <property type="entry name" value="zf-C4_ClpX"/>
    <property type="match status" value="1"/>
</dbReference>
<dbReference type="SUPFAM" id="SSF57716">
    <property type="entry name" value="Glucocorticoid receptor-like (DNA-binding domain)"/>
    <property type="match status" value="1"/>
</dbReference>
<dbReference type="SUPFAM" id="SSF52540">
    <property type="entry name" value="P-loop containing nucleoside triphosphate hydrolases"/>
    <property type="match status" value="1"/>
</dbReference>
<dbReference type="PROSITE" id="PS51902">
    <property type="entry name" value="CLPX_ZB"/>
    <property type="match status" value="1"/>
</dbReference>
<proteinExistence type="inferred from homology"/>
<reference key="1">
    <citation type="journal article" date="2001" name="Proc. Natl. Acad. Sci. U.S.A.">
        <title>Complete genome sequence of an M1 strain of Streptococcus pyogenes.</title>
        <authorList>
            <person name="Ferretti J.J."/>
            <person name="McShan W.M."/>
            <person name="Ajdic D.J."/>
            <person name="Savic D.J."/>
            <person name="Savic G."/>
            <person name="Lyon K."/>
            <person name="Primeaux C."/>
            <person name="Sezate S."/>
            <person name="Suvorov A.N."/>
            <person name="Kenton S."/>
            <person name="Lai H.S."/>
            <person name="Lin S.P."/>
            <person name="Qian Y."/>
            <person name="Jia H.G."/>
            <person name="Najar F.Z."/>
            <person name="Ren Q."/>
            <person name="Zhu H."/>
            <person name="Song L."/>
            <person name="White J."/>
            <person name="Yuan X."/>
            <person name="Clifton S.W."/>
            <person name="Roe B.A."/>
            <person name="McLaughlin R.E."/>
        </authorList>
    </citation>
    <scope>NUCLEOTIDE SEQUENCE [LARGE SCALE GENOMIC DNA]</scope>
    <source>
        <strain>ATCC 700294 / SF370 / Serotype M1</strain>
    </source>
</reference>
<reference key="2">
    <citation type="journal article" date="2005" name="J. Infect. Dis.">
        <title>Evolutionary origin and emergence of a highly successful clone of serotype M1 group A Streptococcus involved multiple horizontal gene transfer events.</title>
        <authorList>
            <person name="Sumby P."/>
            <person name="Porcella S.F."/>
            <person name="Madrigal A.G."/>
            <person name="Barbian K.D."/>
            <person name="Virtaneva K."/>
            <person name="Ricklefs S.M."/>
            <person name="Sturdevant D.E."/>
            <person name="Graham M.R."/>
            <person name="Vuopio-Varkila J."/>
            <person name="Hoe N.P."/>
            <person name="Musser J.M."/>
        </authorList>
    </citation>
    <scope>NUCLEOTIDE SEQUENCE [LARGE SCALE GENOMIC DNA]</scope>
    <source>
        <strain>ATCC BAA-947 / MGAS5005 / Serotype M1</strain>
    </source>
</reference>
<accession>P63793</accession>
<accession>Q48ZA9</accession>
<accession>Q9A089</accession>
<gene>
    <name evidence="1" type="primary">clpX</name>
    <name type="ordered locus">SPy_0885</name>
    <name type="ordered locus">M5005_Spy0691</name>
</gene>
<feature type="chain" id="PRO_0000160434" description="ATP-dependent Clp protease ATP-binding subunit ClpX">
    <location>
        <begin position="1"/>
        <end position="409"/>
    </location>
</feature>
<feature type="domain" description="ClpX-type ZB" evidence="2">
    <location>
        <begin position="1"/>
        <end position="54"/>
    </location>
</feature>
<feature type="binding site" evidence="2">
    <location>
        <position position="13"/>
    </location>
    <ligand>
        <name>Zn(2+)</name>
        <dbReference type="ChEBI" id="CHEBI:29105"/>
    </ligand>
</feature>
<feature type="binding site" evidence="2">
    <location>
        <position position="16"/>
    </location>
    <ligand>
        <name>Zn(2+)</name>
        <dbReference type="ChEBI" id="CHEBI:29105"/>
    </ligand>
</feature>
<feature type="binding site" evidence="2">
    <location>
        <position position="35"/>
    </location>
    <ligand>
        <name>Zn(2+)</name>
        <dbReference type="ChEBI" id="CHEBI:29105"/>
    </ligand>
</feature>
<feature type="binding site" evidence="2">
    <location>
        <position position="38"/>
    </location>
    <ligand>
        <name>Zn(2+)</name>
        <dbReference type="ChEBI" id="CHEBI:29105"/>
    </ligand>
</feature>
<feature type="binding site" evidence="1">
    <location>
        <begin position="119"/>
        <end position="126"/>
    </location>
    <ligand>
        <name>ATP</name>
        <dbReference type="ChEBI" id="CHEBI:30616"/>
    </ligand>
</feature>
<evidence type="ECO:0000255" key="1">
    <source>
        <dbReference type="HAMAP-Rule" id="MF_00175"/>
    </source>
</evidence>
<evidence type="ECO:0000255" key="2">
    <source>
        <dbReference type="PROSITE-ProRule" id="PRU01250"/>
    </source>
</evidence>
<sequence length="409" mass="44991">MAGSRTNDIKVYCSFCGKSQDDVKKIIAGNNVFICNECVALSQEIIKEELAEEVLADLTEVPKPKELLDVLNQYVVGQDRAKRALSVAVYNHYKRVSFTESRDDDDVDLQKSNILMIGPTGSGKTFLAQTLAKSLNVPFAIADATSLTEAGYVGEDVENILLKLIQAADYNVERAERGIIYVDEIDKIAKKGENVSITRDVSGEGVQQALLKIIEGTVASVPPQGGRKHPNQEMIQIDTKNILFIVGGAFDGIEEIVKQRLGEKVIGFGQNSRKIDDNASYMQEIISEDIQKFGLIPEFIGRLPVVAALEQLNTSDLIQILTEPRNALVKQYQALLSYDGVELAFDKEALEAIANKAIERKTGARGLRSIIEETMLDIMFEIPSQEDVTKVRITKAAVEGKSKPVLETA</sequence>